<protein>
    <recommendedName>
        <fullName evidence="1">Large ribosomal subunit protein uL14c</fullName>
    </recommendedName>
    <alternativeName>
        <fullName evidence="2">50S ribosomal protein L14, chloroplastic</fullName>
    </alternativeName>
</protein>
<keyword id="KW-0150">Chloroplast</keyword>
<keyword id="KW-0934">Plastid</keyword>
<keyword id="KW-0687">Ribonucleoprotein</keyword>
<keyword id="KW-0689">Ribosomal protein</keyword>
<keyword id="KW-0694">RNA-binding</keyword>
<keyword id="KW-0699">rRNA-binding</keyword>
<name>RK14_OENPA</name>
<reference key="1">
    <citation type="journal article" date="2008" name="Nucleic Acids Res.">
        <title>The complete nucleotide sequences of the five genetically distinct plastid genomes of Oenothera, subsection Oenothera: I. Sequence evaluation and plastome evolution.</title>
        <authorList>
            <person name="Greiner S."/>
            <person name="Wang X."/>
            <person name="Rauwolf U."/>
            <person name="Silber M.V."/>
            <person name="Mayer K."/>
            <person name="Meurer J."/>
            <person name="Haberer G."/>
            <person name="Herrmann R.G."/>
        </authorList>
    </citation>
    <scope>NUCLEOTIDE SEQUENCE [LARGE SCALE GENOMIC DNA]</scope>
    <source>
        <strain>cv. Atrovirens</strain>
    </source>
</reference>
<accession>B0Z5G4</accession>
<comment type="function">
    <text evidence="1">Binds to 23S rRNA.</text>
</comment>
<comment type="subunit">
    <text evidence="1">Part of the 50S ribosomal subunit.</text>
</comment>
<comment type="subcellular location">
    <subcellularLocation>
        <location>Plastid</location>
        <location>Chloroplast</location>
    </subcellularLocation>
</comment>
<comment type="similarity">
    <text evidence="1">Belongs to the universal ribosomal protein uL14 family.</text>
</comment>
<feature type="chain" id="PRO_0000355897" description="Large ribosomal subunit protein uL14c">
    <location>
        <begin position="1"/>
        <end position="122"/>
    </location>
</feature>
<geneLocation type="chloroplast"/>
<gene>
    <name evidence="1" type="primary">rpl14</name>
</gene>
<proteinExistence type="inferred from homology"/>
<sequence length="122" mass="13428">MIQPQTRLNVADNSGARELMCIRIIGASNRRYAHIGDIIVAVIKEALPSTSLERSEVVRAVIVRTCKELKCDDGIIIRYDDNAAVVIDQEGNPKGTRVFGAIAHELRELSFTKIVSLAPEVL</sequence>
<evidence type="ECO:0000255" key="1">
    <source>
        <dbReference type="HAMAP-Rule" id="MF_01367"/>
    </source>
</evidence>
<evidence type="ECO:0000305" key="2"/>
<organism>
    <name type="scientific">Oenothera parviflora</name>
    <name type="common">Small-flowered evening primrose</name>
    <name type="synonym">Oenothera cruciata</name>
    <dbReference type="NCBI Taxonomy" id="482429"/>
    <lineage>
        <taxon>Eukaryota</taxon>
        <taxon>Viridiplantae</taxon>
        <taxon>Streptophyta</taxon>
        <taxon>Embryophyta</taxon>
        <taxon>Tracheophyta</taxon>
        <taxon>Spermatophyta</taxon>
        <taxon>Magnoliopsida</taxon>
        <taxon>eudicotyledons</taxon>
        <taxon>Gunneridae</taxon>
        <taxon>Pentapetalae</taxon>
        <taxon>rosids</taxon>
        <taxon>malvids</taxon>
        <taxon>Myrtales</taxon>
        <taxon>Onagraceae</taxon>
        <taxon>Onagroideae</taxon>
        <taxon>Onagreae</taxon>
        <taxon>Oenothera</taxon>
    </lineage>
</organism>
<dbReference type="EMBL" id="EU262891">
    <property type="protein sequence ID" value="ABX10157.1"/>
    <property type="molecule type" value="Genomic_DNA"/>
</dbReference>
<dbReference type="RefSeq" id="YP_001687487.1">
    <property type="nucleotide sequence ID" value="NC_010362.1"/>
</dbReference>
<dbReference type="SMR" id="B0Z5G4"/>
<dbReference type="GeneID" id="5955405"/>
<dbReference type="GO" id="GO:0009507">
    <property type="term" value="C:chloroplast"/>
    <property type="evidence" value="ECO:0007669"/>
    <property type="project" value="UniProtKB-SubCell"/>
</dbReference>
<dbReference type="GO" id="GO:0022625">
    <property type="term" value="C:cytosolic large ribosomal subunit"/>
    <property type="evidence" value="ECO:0007669"/>
    <property type="project" value="TreeGrafter"/>
</dbReference>
<dbReference type="GO" id="GO:0070180">
    <property type="term" value="F:large ribosomal subunit rRNA binding"/>
    <property type="evidence" value="ECO:0007669"/>
    <property type="project" value="TreeGrafter"/>
</dbReference>
<dbReference type="GO" id="GO:0003735">
    <property type="term" value="F:structural constituent of ribosome"/>
    <property type="evidence" value="ECO:0007669"/>
    <property type="project" value="InterPro"/>
</dbReference>
<dbReference type="GO" id="GO:0006412">
    <property type="term" value="P:translation"/>
    <property type="evidence" value="ECO:0007669"/>
    <property type="project" value="UniProtKB-UniRule"/>
</dbReference>
<dbReference type="CDD" id="cd00337">
    <property type="entry name" value="Ribosomal_uL14"/>
    <property type="match status" value="1"/>
</dbReference>
<dbReference type="FunFam" id="2.40.150.20:FF:000002">
    <property type="entry name" value="50S ribosomal protein L14, chloroplastic"/>
    <property type="match status" value="1"/>
</dbReference>
<dbReference type="Gene3D" id="2.40.150.20">
    <property type="entry name" value="Ribosomal protein L14"/>
    <property type="match status" value="1"/>
</dbReference>
<dbReference type="HAMAP" id="MF_01367">
    <property type="entry name" value="Ribosomal_uL14"/>
    <property type="match status" value="1"/>
</dbReference>
<dbReference type="InterPro" id="IPR000218">
    <property type="entry name" value="Ribosomal_uL14"/>
</dbReference>
<dbReference type="InterPro" id="IPR005745">
    <property type="entry name" value="Ribosomal_uL14_bac-type"/>
</dbReference>
<dbReference type="InterPro" id="IPR019972">
    <property type="entry name" value="Ribosomal_uL14_CS"/>
</dbReference>
<dbReference type="InterPro" id="IPR036853">
    <property type="entry name" value="Ribosomal_uL14_sf"/>
</dbReference>
<dbReference type="NCBIfam" id="TIGR01067">
    <property type="entry name" value="rplN_bact"/>
    <property type="match status" value="1"/>
</dbReference>
<dbReference type="PANTHER" id="PTHR11761">
    <property type="entry name" value="50S/60S RIBOSOMAL PROTEIN L14/L23"/>
    <property type="match status" value="1"/>
</dbReference>
<dbReference type="PANTHER" id="PTHR11761:SF3">
    <property type="entry name" value="LARGE RIBOSOMAL SUBUNIT PROTEIN UL14M"/>
    <property type="match status" value="1"/>
</dbReference>
<dbReference type="Pfam" id="PF00238">
    <property type="entry name" value="Ribosomal_L14"/>
    <property type="match status" value="1"/>
</dbReference>
<dbReference type="SMART" id="SM01374">
    <property type="entry name" value="Ribosomal_L14"/>
    <property type="match status" value="1"/>
</dbReference>
<dbReference type="SUPFAM" id="SSF50193">
    <property type="entry name" value="Ribosomal protein L14"/>
    <property type="match status" value="1"/>
</dbReference>
<dbReference type="PROSITE" id="PS00049">
    <property type="entry name" value="RIBOSOMAL_L14"/>
    <property type="match status" value="1"/>
</dbReference>